<dbReference type="EMBL" id="BC105258">
    <property type="protein sequence ID" value="AAI05259.1"/>
    <property type="molecule type" value="mRNA"/>
</dbReference>
<dbReference type="EMBL" id="X98697">
    <property type="protein sequence ID" value="CAA67257.1"/>
    <property type="molecule type" value="mRNA"/>
</dbReference>
<dbReference type="PIR" id="S65551">
    <property type="entry name" value="S65551"/>
</dbReference>
<dbReference type="RefSeq" id="NP_001029108.1">
    <property type="nucleotide sequence ID" value="NM_001033936.1"/>
</dbReference>
<dbReference type="PDB" id="6XZ6">
    <property type="method" value="X-ray"/>
    <property type="resolution" value="2.70 A"/>
    <property type="chains" value="B/D=264-323"/>
</dbReference>
<dbReference type="PDBsum" id="6XZ6"/>
<dbReference type="SMR" id="Q28085"/>
<dbReference type="FunCoup" id="Q28085">
    <property type="interactions" value="466"/>
</dbReference>
<dbReference type="STRING" id="9913.ENSBTAP00000073132"/>
<dbReference type="GlyCosmos" id="Q28085">
    <property type="glycosylation" value="2 sites, No reported glycans"/>
</dbReference>
<dbReference type="GlyGen" id="Q28085">
    <property type="glycosylation" value="2 sites"/>
</dbReference>
<dbReference type="PaxDb" id="9913-ENSBTAP00000029340"/>
<dbReference type="GeneID" id="280816"/>
<dbReference type="KEGG" id="bta:280816"/>
<dbReference type="CTD" id="3075"/>
<dbReference type="eggNOG" id="ENOG502QVSB">
    <property type="taxonomic scope" value="Eukaryota"/>
</dbReference>
<dbReference type="InParanoid" id="Q28085"/>
<dbReference type="OrthoDB" id="10051774at2759"/>
<dbReference type="Proteomes" id="UP000009136">
    <property type="component" value="Unplaced"/>
</dbReference>
<dbReference type="GO" id="GO:0005615">
    <property type="term" value="C:extracellular space"/>
    <property type="evidence" value="ECO:0000318"/>
    <property type="project" value="GO_Central"/>
</dbReference>
<dbReference type="GO" id="GO:0001851">
    <property type="term" value="F:complement component C3b binding"/>
    <property type="evidence" value="ECO:0000318"/>
    <property type="project" value="GO_Central"/>
</dbReference>
<dbReference type="GO" id="GO:0006956">
    <property type="term" value="P:complement activation"/>
    <property type="evidence" value="ECO:0000318"/>
    <property type="project" value="GO_Central"/>
</dbReference>
<dbReference type="GO" id="GO:0006957">
    <property type="term" value="P:complement activation, alternative pathway"/>
    <property type="evidence" value="ECO:0007669"/>
    <property type="project" value="UniProtKB-KW"/>
</dbReference>
<dbReference type="CDD" id="cd00033">
    <property type="entry name" value="CCP"/>
    <property type="match status" value="16"/>
</dbReference>
<dbReference type="FunFam" id="2.10.70.10:FF:000130">
    <property type="entry name" value="Complement factor H"/>
    <property type="match status" value="1"/>
</dbReference>
<dbReference type="FunFam" id="2.10.70.10:FF:000026">
    <property type="entry name" value="Complement inhibitory factor H"/>
    <property type="match status" value="4"/>
</dbReference>
<dbReference type="FunFam" id="2.10.70.10:FF:000054">
    <property type="entry name" value="Complement inhibitory factor H"/>
    <property type="match status" value="1"/>
</dbReference>
<dbReference type="FunFam" id="2.10.70.10:FF:000060">
    <property type="entry name" value="Complement inhibitory factor H"/>
    <property type="match status" value="1"/>
</dbReference>
<dbReference type="FunFam" id="2.10.70.10:FF:000014">
    <property type="entry name" value="Membrane cofactor protein"/>
    <property type="match status" value="1"/>
</dbReference>
<dbReference type="Gene3D" id="2.10.70.10">
    <property type="entry name" value="Complement Module, domain 1"/>
    <property type="match status" value="20"/>
</dbReference>
<dbReference type="InterPro" id="IPR051503">
    <property type="entry name" value="ComplSys_Reg/VirEntry_Med"/>
</dbReference>
<dbReference type="InterPro" id="IPR035976">
    <property type="entry name" value="Sushi/SCR/CCP_sf"/>
</dbReference>
<dbReference type="InterPro" id="IPR000436">
    <property type="entry name" value="Sushi_SCR_CCP_dom"/>
</dbReference>
<dbReference type="PANTHER" id="PTHR45785:SF7">
    <property type="entry name" value="COMPLEMENT FACTOR H"/>
    <property type="match status" value="1"/>
</dbReference>
<dbReference type="PANTHER" id="PTHR45785">
    <property type="entry name" value="COMPLEMENT FACTOR H-RELATED"/>
    <property type="match status" value="1"/>
</dbReference>
<dbReference type="Pfam" id="PF00084">
    <property type="entry name" value="Sushi"/>
    <property type="match status" value="18"/>
</dbReference>
<dbReference type="SMART" id="SM00032">
    <property type="entry name" value="CCP"/>
    <property type="match status" value="19"/>
</dbReference>
<dbReference type="SUPFAM" id="SSF57535">
    <property type="entry name" value="Complement control module/SCR domain"/>
    <property type="match status" value="19"/>
</dbReference>
<dbReference type="PROSITE" id="PS50923">
    <property type="entry name" value="SUSHI"/>
    <property type="match status" value="16"/>
</dbReference>
<name>CFAH_BOVIN</name>
<reference key="1">
    <citation type="submission" date="2005-09" db="EMBL/GenBank/DDBJ databases">
        <authorList>
            <consortium name="NIH - Mammalian Gene Collection (MGC) project"/>
        </authorList>
    </citation>
    <scope>NUCLEOTIDE SEQUENCE [LARGE SCALE MRNA]</scope>
    <source>
        <strain>Hereford</strain>
        <tissue>Ascending colon</tissue>
    </source>
</reference>
<reference key="2">
    <citation type="journal article" date="1996" name="Biochem. J.">
        <title>Prediction from sequence comparisons of residues of factor H involved in the interaction with complement component C3b.</title>
        <authorList>
            <person name="Soames C.J."/>
            <person name="Day A.J."/>
            <person name="Sim R.B."/>
        </authorList>
    </citation>
    <scope>NUCLEOTIDE SEQUENCE [MRNA] OF 92-761</scope>
    <scope>PROTEIN SEQUENCE OF 19-34</scope>
    <source>
        <tissue>Liver</tissue>
    </source>
</reference>
<gene>
    <name type="primary">CFH</name>
    <name type="synonym">HF1</name>
</gene>
<organism>
    <name type="scientific">Bos taurus</name>
    <name type="common">Bovine</name>
    <dbReference type="NCBI Taxonomy" id="9913"/>
    <lineage>
        <taxon>Eukaryota</taxon>
        <taxon>Metazoa</taxon>
        <taxon>Chordata</taxon>
        <taxon>Craniata</taxon>
        <taxon>Vertebrata</taxon>
        <taxon>Euteleostomi</taxon>
        <taxon>Mammalia</taxon>
        <taxon>Eutheria</taxon>
        <taxon>Laurasiatheria</taxon>
        <taxon>Artiodactyla</taxon>
        <taxon>Ruminantia</taxon>
        <taxon>Pecora</taxon>
        <taxon>Bovidae</taxon>
        <taxon>Bovinae</taxon>
        <taxon>Bos</taxon>
    </lineage>
</organism>
<evidence type="ECO:0000250" key="1">
    <source>
        <dbReference type="UniProtKB" id="P08603"/>
    </source>
</evidence>
<evidence type="ECO:0000255" key="2"/>
<evidence type="ECO:0000255" key="3">
    <source>
        <dbReference type="PROSITE-ProRule" id="PRU00302"/>
    </source>
</evidence>
<evidence type="ECO:0000269" key="4">
    <source>
    </source>
</evidence>
<evidence type="ECO:0000305" key="5"/>
<evidence type="ECO:0007829" key="6">
    <source>
        <dbReference type="PDB" id="6XZ6"/>
    </source>
</evidence>
<feature type="signal peptide" evidence="4">
    <location>
        <begin position="1"/>
        <end position="18"/>
    </location>
</feature>
<feature type="chain" id="PRO_0000048516" description="Complement factor H">
    <location>
        <begin position="19"/>
        <end position="1236"/>
    </location>
</feature>
<feature type="domain" description="Sushi 1" evidence="3">
    <location>
        <begin position="19"/>
        <end position="82"/>
    </location>
</feature>
<feature type="domain" description="Sushi 2" evidence="3">
    <location>
        <begin position="83"/>
        <end position="143"/>
    </location>
</feature>
<feature type="domain" description="Sushi 3" evidence="3">
    <location>
        <begin position="144"/>
        <end position="207"/>
    </location>
</feature>
<feature type="domain" description="Sushi 4" evidence="3">
    <location>
        <begin position="208"/>
        <end position="264"/>
    </location>
</feature>
<feature type="domain" description="Sushi 5" evidence="3">
    <location>
        <begin position="265"/>
        <end position="322"/>
    </location>
</feature>
<feature type="domain" description="Sushi 6" evidence="3">
    <location>
        <begin position="325"/>
        <end position="383"/>
    </location>
</feature>
<feature type="domain" description="Sushi 7" evidence="3">
    <location>
        <begin position="385"/>
        <end position="442"/>
    </location>
</feature>
<feature type="domain" description="Sushi 8" evidence="3">
    <location>
        <begin position="444"/>
        <end position="505"/>
    </location>
</feature>
<feature type="domain" description="Sushi 9" evidence="3">
    <location>
        <begin position="507"/>
        <end position="562"/>
    </location>
</feature>
<feature type="domain" description="Sushi 10" evidence="3">
    <location>
        <begin position="565"/>
        <end position="623"/>
    </location>
</feature>
<feature type="domain" description="Sushi 11" evidence="3">
    <location>
        <begin position="627"/>
        <end position="685"/>
    </location>
</feature>
<feature type="domain" description="Sushi 12" evidence="3">
    <location>
        <begin position="688"/>
        <end position="745"/>
    </location>
</feature>
<feature type="domain" description="Sushi 13" evidence="3">
    <location>
        <begin position="750"/>
        <end position="804"/>
    </location>
</feature>
<feature type="domain" description="Sushi 14" evidence="3">
    <location>
        <begin position="809"/>
        <end position="866"/>
    </location>
</feature>
<feature type="domain" description="Sushi 15" evidence="3">
    <location>
        <begin position="868"/>
        <end position="936"/>
    </location>
</feature>
<feature type="domain" description="Sushi 16" evidence="3">
    <location>
        <begin position="937"/>
        <end position="994"/>
    </location>
</feature>
<feature type="domain" description="Sushi 17" evidence="3">
    <location>
        <begin position="995"/>
        <end position="1053"/>
    </location>
</feature>
<feature type="domain" description="Sushi 18" evidence="3">
    <location>
        <begin position="1054"/>
        <end position="1111"/>
    </location>
</feature>
<feature type="domain" description="Sushi 19" evidence="3">
    <location>
        <begin position="1114"/>
        <end position="1172"/>
    </location>
</feature>
<feature type="domain" description="Sushi 20" evidence="3">
    <location>
        <begin position="1173"/>
        <end position="1235"/>
    </location>
</feature>
<feature type="modified residue" description="Sulfotyrosine" evidence="2">
    <location>
        <position position="168"/>
    </location>
</feature>
<feature type="modified residue" description="Sulfotyrosine" evidence="2">
    <location>
        <position position="170"/>
    </location>
</feature>
<feature type="modified residue" description="Sulfotyrosine" evidence="2">
    <location>
        <position position="465"/>
    </location>
</feature>
<feature type="modified residue" description="Sulfotyrosine" evidence="2">
    <location>
        <position position="473"/>
    </location>
</feature>
<feature type="modified residue" description="Sulfotyrosine" evidence="2">
    <location>
        <position position="575"/>
    </location>
</feature>
<feature type="modified residue" description="Sulfotyrosine" evidence="2">
    <location>
        <position position="579"/>
    </location>
</feature>
<feature type="modified residue" description="Sulfotyrosine" evidence="2">
    <location>
        <position position="585"/>
    </location>
</feature>
<feature type="glycosylation site" description="N-linked (GlcNAc...) asparagine" evidence="2">
    <location>
        <position position="775"/>
    </location>
</feature>
<feature type="glycosylation site" description="N-linked (GlcNAc...) asparagine" evidence="2">
    <location>
        <position position="1100"/>
    </location>
</feature>
<feature type="disulfide bond" evidence="3">
    <location>
        <begin position="21"/>
        <end position="66"/>
    </location>
</feature>
<feature type="disulfide bond" evidence="3">
    <location>
        <begin position="52"/>
        <end position="80"/>
    </location>
</feature>
<feature type="disulfide bond" evidence="3">
    <location>
        <begin position="85"/>
        <end position="129"/>
    </location>
</feature>
<feature type="disulfide bond" evidence="3">
    <location>
        <begin position="114"/>
        <end position="141"/>
    </location>
</feature>
<feature type="disulfide bond" evidence="3">
    <location>
        <begin position="146"/>
        <end position="192"/>
    </location>
</feature>
<feature type="disulfide bond" evidence="3">
    <location>
        <begin position="178"/>
        <end position="205"/>
    </location>
</feature>
<feature type="disulfide bond" evidence="3">
    <location>
        <begin position="210"/>
        <end position="251"/>
    </location>
</feature>
<feature type="disulfide bond" evidence="3">
    <location>
        <begin position="237"/>
        <end position="262"/>
    </location>
</feature>
<feature type="disulfide bond" evidence="3">
    <location>
        <begin position="267"/>
        <end position="309"/>
    </location>
</feature>
<feature type="disulfide bond" evidence="3">
    <location>
        <begin position="294"/>
        <end position="320"/>
    </location>
</feature>
<feature type="disulfide bond" evidence="3">
    <location>
        <begin position="325"/>
        <end position="372"/>
    </location>
</feature>
<feature type="disulfide bond" evidence="3">
    <location>
        <begin position="355"/>
        <end position="383"/>
    </location>
</feature>
<feature type="disulfide bond" evidence="3">
    <location>
        <begin position="387"/>
        <end position="429"/>
    </location>
</feature>
<feature type="disulfide bond" evidence="3">
    <location>
        <begin position="414"/>
        <end position="440"/>
    </location>
</feature>
<feature type="disulfide bond" evidence="3">
    <location>
        <begin position="446"/>
        <end position="492"/>
    </location>
</feature>
<feature type="disulfide bond" evidence="3">
    <location>
        <begin position="475"/>
        <end position="503"/>
    </location>
</feature>
<feature type="disulfide bond" evidence="3">
    <location>
        <begin position="507"/>
        <end position="551"/>
    </location>
</feature>
<feature type="disulfide bond" evidence="3">
    <location>
        <begin position="534"/>
        <end position="562"/>
    </location>
</feature>
<feature type="disulfide bond" evidence="3">
    <location>
        <begin position="567"/>
        <end position="609"/>
    </location>
</feature>
<feature type="disulfide bond" evidence="3">
    <location>
        <begin position="595"/>
        <end position="621"/>
    </location>
</feature>
<feature type="disulfide bond" evidence="3">
    <location>
        <begin position="629"/>
        <end position="672"/>
    </location>
</feature>
<feature type="disulfide bond" evidence="3">
    <location>
        <begin position="658"/>
        <end position="683"/>
    </location>
</feature>
<feature type="disulfide bond" evidence="3">
    <location>
        <begin position="690"/>
        <end position="732"/>
    </location>
</feature>
<feature type="disulfide bond" evidence="3">
    <location>
        <begin position="718"/>
        <end position="743"/>
    </location>
</feature>
<feature type="disulfide bond" evidence="3">
    <location>
        <begin position="752"/>
        <end position="791"/>
    </location>
</feature>
<feature type="disulfide bond" evidence="3">
    <location>
        <begin position="780"/>
        <end position="802"/>
    </location>
</feature>
<feature type="disulfide bond" evidence="3">
    <location>
        <begin position="811"/>
        <end position="853"/>
    </location>
</feature>
<feature type="disulfide bond" evidence="3">
    <location>
        <begin position="839"/>
        <end position="864"/>
    </location>
</feature>
<feature type="disulfide bond" evidence="3">
    <location>
        <begin position="870"/>
        <end position="923"/>
    </location>
</feature>
<feature type="disulfide bond" evidence="3">
    <location>
        <begin position="909"/>
        <end position="934"/>
    </location>
</feature>
<feature type="disulfide bond" evidence="3">
    <location>
        <begin position="939"/>
        <end position="981"/>
    </location>
</feature>
<feature type="disulfide bond" evidence="3">
    <location>
        <begin position="967"/>
        <end position="992"/>
    </location>
</feature>
<feature type="disulfide bond" evidence="3">
    <location>
        <begin position="997"/>
        <end position="1040"/>
    </location>
</feature>
<feature type="disulfide bond" evidence="3">
    <location>
        <begin position="1026"/>
        <end position="1051"/>
    </location>
</feature>
<feature type="disulfide bond" evidence="3">
    <location>
        <begin position="1056"/>
        <end position="1098"/>
    </location>
</feature>
<feature type="disulfide bond" evidence="3">
    <location>
        <begin position="1084"/>
        <end position="1109"/>
    </location>
</feature>
<feature type="disulfide bond" evidence="3">
    <location>
        <begin position="1116"/>
        <end position="1159"/>
    </location>
</feature>
<feature type="disulfide bond" evidence="3">
    <location>
        <begin position="1145"/>
        <end position="1170"/>
    </location>
</feature>
<feature type="disulfide bond" evidence="3">
    <location>
        <begin position="1174"/>
        <end position="1225"/>
    </location>
</feature>
<feature type="disulfide bond" evidence="3">
    <location>
        <begin position="1208"/>
        <end position="1235"/>
    </location>
</feature>
<feature type="sequence conflict" description="In Ref. 2; CAA67257." evidence="5" ref="2">
    <original>PF</original>
    <variation>VS</variation>
    <location>
        <begin position="92"/>
        <end position="93"/>
    </location>
</feature>
<feature type="sequence conflict" description="In Ref. 2; CAA67257." evidence="5" ref="2">
    <original>F</original>
    <variation>P</variation>
    <location>
        <position position="96"/>
    </location>
</feature>
<feature type="sequence conflict" description="In Ref. 2; CAA67257." evidence="5" ref="2">
    <original>T</original>
    <variation>N</variation>
    <location>
        <position position="102"/>
    </location>
</feature>
<feature type="sequence conflict" description="In Ref. 2; CAA67257." evidence="5" ref="2">
    <original>T</original>
    <variation>P</variation>
    <location>
        <position position="212"/>
    </location>
</feature>
<feature type="sequence conflict" description="In Ref. 2; CAA67257." evidence="5" ref="2">
    <original>A</original>
    <variation>Q</variation>
    <location>
        <position position="229"/>
    </location>
</feature>
<feature type="sequence conflict" description="In Ref. 2; CAA67257." evidence="5" ref="2">
    <original>I</original>
    <variation>V</variation>
    <location>
        <position position="250"/>
    </location>
</feature>
<feature type="sequence conflict" description="In Ref. 2; CAA67257." evidence="5" ref="2">
    <original>T</original>
    <variation>A</variation>
    <location>
        <position position="371"/>
    </location>
</feature>
<feature type="sequence conflict" description="In Ref. 2; CAA67257." evidence="5" ref="2">
    <original>TPY</original>
    <variation>NQH</variation>
    <location>
        <begin position="397"/>
        <end position="399"/>
    </location>
</feature>
<feature type="sequence conflict" description="In Ref. 2; CAA67257." evidence="5" ref="2">
    <original>R</original>
    <variation>H</variation>
    <location>
        <position position="413"/>
    </location>
</feature>
<feature type="sequence conflict" description="In Ref. 2; CAA67257." evidence="5" ref="2">
    <original>R</original>
    <variation>K</variation>
    <location>
        <position position="661"/>
    </location>
</feature>
<feature type="sequence conflict" description="In Ref. 2; CAA67257." evidence="5" ref="2">
    <original>W</original>
    <variation>S</variation>
    <location>
        <position position="677"/>
    </location>
</feature>
<feature type="sequence conflict" description="In Ref. 2; CAA67257." evidence="5" ref="2">
    <original>GNIP</original>
    <variation>EIS</variation>
    <location>
        <begin position="691"/>
        <end position="694"/>
    </location>
</feature>
<feature type="sequence conflict" description="In Ref. 2; CAA67257." evidence="5" ref="2">
    <original>Y</original>
    <variation>I</variation>
    <location>
        <position position="708"/>
    </location>
</feature>
<feature type="sequence conflict" description="In Ref. 2; CAA67257." evidence="5" ref="2">
    <original>PPE</original>
    <variation>FLL</variation>
    <location>
        <begin position="759"/>
        <end position="761"/>
    </location>
</feature>
<feature type="strand" evidence="6">
    <location>
        <begin position="275"/>
        <end position="279"/>
    </location>
</feature>
<feature type="strand" evidence="6">
    <location>
        <begin position="289"/>
        <end position="294"/>
    </location>
</feature>
<feature type="strand" evidence="6">
    <location>
        <begin position="299"/>
        <end position="304"/>
    </location>
</feature>
<feature type="strand" evidence="6">
    <location>
        <begin position="306"/>
        <end position="310"/>
    </location>
</feature>
<feature type="strand" evidence="6">
    <location>
        <begin position="313"/>
        <end position="316"/>
    </location>
</feature>
<sequence>MRFPAKIVWLVLWTVCVAEDCKEPPPRKETEILSGSWTEQTYQEGTQATYKCRPGYRTLGSIVMMCRGGKWVSLHPSRICRKKPCAHPGDTPFGSFHLAEGTQFEYGAKVVYTCDEGYQMVGEMNFRECDTNGWTNDIPICEVVKCLPVTEPENGKIFSDALEPDQEYTYGQVVQFECNSGYMLDGPKQIHCSAGGVWSAETPKCVEIFCKTPVILNGQAVLPKATYKANERVQYRCAAGFEYGQRGDTICTKSGWTPAPTCIEITCDPPRIPNGVYRPELSKYRGQDKITYECKKGFFPEIRGTDATCTRDGWVPVPRCAWKPCSYPVIKHGRLYYSYRGYFPARVNQQFVYSCDHHFVPPSQRSWDHLTCTAEGWSPEEPCLRQCIFNYLENGHTPYREEKYLQGETVRVRCYEGYSLQNDQNTMTCTESGWSPPPRCIRVKTCSKSNIRIENGFLSESTFTYPLNKQTEYKCKPGYVTADGKTSGLITCLKNGWSAQPVCIKSCDRPVFEKARVKSDGTWFRLNDRLDYECVDGYENRDGRTTGSIVCGQDGWSDKAACYERECSIPEMDPYLNAYPRKETYKVGDVLKFSCSQGRIMVGADSVQCYHFGWSPKLPTCKVKKVKSCALPPELPNGKRKEIHKEEYAHNEVVEYACNPRFLMKGSHKIQCVDGEWTALPVCIEEERTCGNIPDLDHGDVKPSVPPYHHGDSVEFSCREAFTMIGPRFITCISGEWTQPPQCIATDELRKCKGSTLFPPEGRQAHKIEYDHNTNKSYQCRGKSEHKHSICINGEWDPKVDCNEEAKIQLCPPPPQVPNACDMTTTVNYQDGEKISILCKENYLIQDAEEIVCKDGRWQSIPRCIEKIGCSQPPQIDHGTISSSSSAEERREIHEQRLYAHGTKLSYTCEEGFEISENNVIICHMGKWSSPPQCVGLPCGLPPYVQNGVVSHKKDRYQYGEEVTYDCDEGFGTDGPASIRCLGGEWSRPQDCISTNCVNLPTFEDAVLTDREKDFYRSGEQVAFKCLSYYQLDGSNTIQCIKSKWIGRPACRDVSCGNPPQVENAIIHNQKSKYQSEERARYECIGNYDLFGEMEVVCLNGTWTEPPQCKDSQGKCGPPPPIDNGDITSLLQSVYPPGMIVEYRCQAYYELRGNKNVVCRNGEWSQLPKCLEACVISEETMRKHHIQLRWKHDKKIYSKTEDTIEFMCQHGYRQLTPKHTFRATCREGKVVYPRCG</sequence>
<keyword id="KW-0002">3D-structure</keyword>
<keyword id="KW-0179">Complement alternate pathway</keyword>
<keyword id="KW-0903">Direct protein sequencing</keyword>
<keyword id="KW-1015">Disulfide bond</keyword>
<keyword id="KW-0325">Glycoprotein</keyword>
<keyword id="KW-0391">Immunity</keyword>
<keyword id="KW-0399">Innate immunity</keyword>
<keyword id="KW-1185">Reference proteome</keyword>
<keyword id="KW-0677">Repeat</keyword>
<keyword id="KW-0964">Secreted</keyword>
<keyword id="KW-0732">Signal</keyword>
<keyword id="KW-0765">Sulfation</keyword>
<keyword id="KW-0768">Sushi</keyword>
<proteinExistence type="evidence at protein level"/>
<comment type="function">
    <text evidence="1">Glycoprotein that plays an essential role in maintaining a well-balanced immune response by modulating complement activation. Acts as a soluble inhibitor of complement, where its binding to self markers such as glycan structures prevents complement activation and amplification on cell surfaces. Accelerates the decay of the complement alternative pathway (AP) C3 convertase C3bBb, thus preventing local formation of more C3b, the central player of the complement amplification loop. As a cofactor of the serine protease factor I, CFH also regulates proteolytic degradation of already-deposited C3b. In addition, mediates several cellular responses through interaction with specific receptors. For example, interacts with CR3/ITGAM receptor and thereby mediates the adhesion of human neutrophils to different pathogens. In turn, these pathogens are phagocytosed and destroyed.</text>
</comment>
<comment type="subunit">
    <text evidence="1">Homodimer. Also forms homooligomers. Interacts with complement protein C3b; this interaction inhibits complement activation. Interacts with complement protein C3d. Interacts with CR3/ITGAM; this interaction mediates adhesion of neutrophils to pathogens leading to pathogen clearance.</text>
</comment>
<comment type="subcellular location">
    <subcellularLocation>
        <location evidence="1">Secreted</location>
    </subcellularLocation>
</comment>
<comment type="tissue specificity">
    <text evidence="1">CFH is one of the most abundant complement components in blood where the liver is the major source of CFH protein in vivo. in addition, CFH is secreted by additional cell types including monocytes, fibroblasts, or endothelial cells.</text>
</comment>
<comment type="domain">
    <text evidence="1">Sushi 1-3 domain represents the minimal unit capable of cofactor activity. The property to discriminate self surfaces from non-self surfaces depends on the C-terminal region made of Sushis 19-20.</text>
</comment>
<comment type="PTM">
    <text evidence="1">Sulfated on tyrosine residues.</text>
</comment>
<protein>
    <recommendedName>
        <fullName>Complement factor H</fullName>
    </recommendedName>
    <alternativeName>
        <fullName>H factor 1</fullName>
    </alternativeName>
</protein>
<accession>Q28085</accession>
<accession>Q3MHF3</accession>
<accession>Q9TQZ7</accession>